<dbReference type="EC" id="2.7.4.3"/>
<dbReference type="EC" id="2.7.4.6"/>
<dbReference type="EMBL" id="AL731851">
    <property type="status" value="NOT_ANNOTATED_CDS"/>
    <property type="molecule type" value="Genomic_DNA"/>
</dbReference>
<dbReference type="EMBL" id="AL732526">
    <property type="status" value="NOT_ANNOTATED_CDS"/>
    <property type="molecule type" value="Genomic_DNA"/>
</dbReference>
<dbReference type="EMBL" id="BC100481">
    <property type="protein sequence ID" value="AAI00482.1"/>
    <property type="molecule type" value="mRNA"/>
</dbReference>
<dbReference type="EMBL" id="BC109352">
    <property type="protein sequence ID" value="AAI09353.1"/>
    <property type="molecule type" value="mRNA"/>
</dbReference>
<dbReference type="CCDS" id="CCDS15846.1"/>
<dbReference type="RefSeq" id="NP_001029046.2">
    <property type="nucleotide sequence ID" value="NM_001033874.2"/>
</dbReference>
<dbReference type="SMR" id="Q32M07"/>
<dbReference type="BioGRID" id="213092">
    <property type="interactions" value="1"/>
</dbReference>
<dbReference type="FunCoup" id="Q32M07">
    <property type="interactions" value="384"/>
</dbReference>
<dbReference type="STRING" id="10090.ENSMUSP00000073789"/>
<dbReference type="PhosphoSitePlus" id="Q32M07"/>
<dbReference type="SwissPalm" id="Q32M07"/>
<dbReference type="PaxDb" id="10090-ENSMUSP00000073789"/>
<dbReference type="ProteomicsDB" id="301712"/>
<dbReference type="Pumba" id="Q32M07"/>
<dbReference type="Antibodypedia" id="18213">
    <property type="antibodies" value="109 antibodies from 27 providers"/>
</dbReference>
<dbReference type="DNASU" id="68870"/>
<dbReference type="Ensembl" id="ENSMUST00000074156.7">
    <property type="protein sequence ID" value="ENSMUSP00000073789.7"/>
    <property type="gene ID" value="ENSMUSG00000026807.9"/>
</dbReference>
<dbReference type="GeneID" id="68870"/>
<dbReference type="KEGG" id="mmu:68870"/>
<dbReference type="UCSC" id="uc008izd.1">
    <property type="organism name" value="mouse"/>
</dbReference>
<dbReference type="AGR" id="MGI:1916120"/>
<dbReference type="CTD" id="158067"/>
<dbReference type="MGI" id="MGI:1916120">
    <property type="gene designation" value="Ak8"/>
</dbReference>
<dbReference type="VEuPathDB" id="HostDB:ENSMUSG00000026807"/>
<dbReference type="eggNOG" id="KOG3078">
    <property type="taxonomic scope" value="Eukaryota"/>
</dbReference>
<dbReference type="eggNOG" id="KOG3079">
    <property type="taxonomic scope" value="Eukaryota"/>
</dbReference>
<dbReference type="GeneTree" id="ENSGT00940000161613"/>
<dbReference type="HOGENOM" id="CLU_044905_0_0_1"/>
<dbReference type="InParanoid" id="Q32M07"/>
<dbReference type="OMA" id="DCIRRGW"/>
<dbReference type="OrthoDB" id="522106at2759"/>
<dbReference type="PhylomeDB" id="Q32M07"/>
<dbReference type="TreeFam" id="TF328560"/>
<dbReference type="Reactome" id="R-MMU-499943">
    <property type="pathway name" value="Interconversion of nucleotide di- and triphosphates"/>
</dbReference>
<dbReference type="BioGRID-ORCS" id="68870">
    <property type="hits" value="0 hits in 78 CRISPR screens"/>
</dbReference>
<dbReference type="ChiTaRS" id="Ak8">
    <property type="organism name" value="mouse"/>
</dbReference>
<dbReference type="PRO" id="PR:Q32M07"/>
<dbReference type="Proteomes" id="UP000000589">
    <property type="component" value="Chromosome 2"/>
</dbReference>
<dbReference type="RNAct" id="Q32M07">
    <property type="molecule type" value="protein"/>
</dbReference>
<dbReference type="Bgee" id="ENSMUSG00000026807">
    <property type="expression patterns" value="Expressed in seminiferous tubule of testis and 81 other cell types or tissues"/>
</dbReference>
<dbReference type="GO" id="GO:0005930">
    <property type="term" value="C:axoneme"/>
    <property type="evidence" value="ECO:0000314"/>
    <property type="project" value="MGI"/>
</dbReference>
<dbReference type="GO" id="GO:0005829">
    <property type="term" value="C:cytosol"/>
    <property type="evidence" value="ECO:0007669"/>
    <property type="project" value="UniProtKB-SubCell"/>
</dbReference>
<dbReference type="GO" id="GO:0036126">
    <property type="term" value="C:sperm flagellum"/>
    <property type="evidence" value="ECO:0000314"/>
    <property type="project" value="MGI"/>
</dbReference>
<dbReference type="GO" id="GO:0004127">
    <property type="term" value="F:(d)CMP kinase activity"/>
    <property type="evidence" value="ECO:0000250"/>
    <property type="project" value="UniProtKB"/>
</dbReference>
<dbReference type="GO" id="GO:0004017">
    <property type="term" value="F:adenylate kinase activity"/>
    <property type="evidence" value="ECO:0000250"/>
    <property type="project" value="UniProtKB"/>
</dbReference>
<dbReference type="GO" id="GO:0016208">
    <property type="term" value="F:AMP binding"/>
    <property type="evidence" value="ECO:0007669"/>
    <property type="project" value="Ensembl"/>
</dbReference>
<dbReference type="GO" id="GO:0005524">
    <property type="term" value="F:ATP binding"/>
    <property type="evidence" value="ECO:0007669"/>
    <property type="project" value="UniProtKB-KW"/>
</dbReference>
<dbReference type="GO" id="GO:0004550">
    <property type="term" value="F:nucleoside diphosphate kinase activity"/>
    <property type="evidence" value="ECO:0000250"/>
    <property type="project" value="UniProtKB"/>
</dbReference>
<dbReference type="GO" id="GO:0021591">
    <property type="term" value="P:ventricular system development"/>
    <property type="evidence" value="ECO:0000315"/>
    <property type="project" value="MGI"/>
</dbReference>
<dbReference type="CDD" id="cd01428">
    <property type="entry name" value="ADK"/>
    <property type="match status" value="2"/>
</dbReference>
<dbReference type="CDD" id="cd22979">
    <property type="entry name" value="DD_AK8"/>
    <property type="match status" value="1"/>
</dbReference>
<dbReference type="FunFam" id="3.40.50.300:FF:001538">
    <property type="entry name" value="Adenylate kinase 8"/>
    <property type="match status" value="1"/>
</dbReference>
<dbReference type="FunFam" id="3.40.50.300:FF:001617">
    <property type="entry name" value="Adenylate kinase 8"/>
    <property type="match status" value="1"/>
</dbReference>
<dbReference type="Gene3D" id="3.40.50.300">
    <property type="entry name" value="P-loop containing nucleotide triphosphate hydrolases"/>
    <property type="match status" value="2"/>
</dbReference>
<dbReference type="HAMAP" id="MF_00235">
    <property type="entry name" value="Adenylate_kinase_Adk"/>
    <property type="match status" value="1"/>
</dbReference>
<dbReference type="InterPro" id="IPR000850">
    <property type="entry name" value="Adenylat/UMP-CMP_kin"/>
</dbReference>
<dbReference type="InterPro" id="IPR036193">
    <property type="entry name" value="ADK_active_lid_dom_sf"/>
</dbReference>
<dbReference type="InterPro" id="IPR027417">
    <property type="entry name" value="P-loop_NTPase"/>
</dbReference>
<dbReference type="PANTHER" id="PTHR23359">
    <property type="entry name" value="NUCLEOTIDE KINASE"/>
    <property type="match status" value="1"/>
</dbReference>
<dbReference type="Pfam" id="PF00406">
    <property type="entry name" value="ADK"/>
    <property type="match status" value="2"/>
</dbReference>
<dbReference type="PRINTS" id="PR00094">
    <property type="entry name" value="ADENYLTKNASE"/>
</dbReference>
<dbReference type="SUPFAM" id="SSF57774">
    <property type="entry name" value="Microbial and mitochondrial ADK, insert 'zinc finger' domain"/>
    <property type="match status" value="2"/>
</dbReference>
<dbReference type="SUPFAM" id="SSF52540">
    <property type="entry name" value="P-loop containing nucleoside triphosphate hydrolases"/>
    <property type="match status" value="2"/>
</dbReference>
<protein>
    <recommendedName>
        <fullName>Adenylate kinase 8</fullName>
        <shortName>AK 8</shortName>
        <ecNumber>2.7.4.3</ecNumber>
        <ecNumber>2.7.4.6</ecNumber>
    </recommendedName>
    <alternativeName>
        <fullName>ATP-AMP transphosphorylase 8</fullName>
    </alternativeName>
</protein>
<proteinExistence type="evidence at protein level"/>
<evidence type="ECO:0000250" key="1">
    <source>
        <dbReference type="UniProtKB" id="P69441"/>
    </source>
</evidence>
<evidence type="ECO:0000250" key="2">
    <source>
        <dbReference type="UniProtKB" id="Q96MA6"/>
    </source>
</evidence>
<evidence type="ECO:0000305" key="3"/>
<comment type="function">
    <text evidence="2">Nucleoside monophosphate (NMP) kinase that catalyzes the reversible transfer of the terminal phosphate group between nucleoside triphosphates and monophosphates. Has highest activity toward AMP, and weaker activity toward dAMP, CMP and dCMP. Also displays broad nucleoside diphosphate kinase activity.</text>
</comment>
<comment type="catalytic activity">
    <reaction evidence="2">
        <text>AMP + ATP = 2 ADP</text>
        <dbReference type="Rhea" id="RHEA:12973"/>
        <dbReference type="ChEBI" id="CHEBI:30616"/>
        <dbReference type="ChEBI" id="CHEBI:456215"/>
        <dbReference type="ChEBI" id="CHEBI:456216"/>
        <dbReference type="EC" id="2.7.4.3"/>
    </reaction>
</comment>
<comment type="catalytic activity">
    <reaction evidence="2">
        <text>a 2'-deoxyribonucleoside 5'-diphosphate + ATP = a 2'-deoxyribonucleoside 5'-triphosphate + ADP</text>
        <dbReference type="Rhea" id="RHEA:44640"/>
        <dbReference type="ChEBI" id="CHEBI:30616"/>
        <dbReference type="ChEBI" id="CHEBI:61560"/>
        <dbReference type="ChEBI" id="CHEBI:73316"/>
        <dbReference type="ChEBI" id="CHEBI:456216"/>
        <dbReference type="EC" id="2.7.4.6"/>
    </reaction>
</comment>
<comment type="catalytic activity">
    <reaction evidence="2">
        <text>a ribonucleoside 5'-diphosphate + ATP = a ribonucleoside 5'-triphosphate + ADP</text>
        <dbReference type="Rhea" id="RHEA:18113"/>
        <dbReference type="ChEBI" id="CHEBI:30616"/>
        <dbReference type="ChEBI" id="CHEBI:57930"/>
        <dbReference type="ChEBI" id="CHEBI:61557"/>
        <dbReference type="ChEBI" id="CHEBI:456216"/>
        <dbReference type="EC" id="2.7.4.6"/>
    </reaction>
</comment>
<comment type="subunit">
    <text evidence="2">Interacts with CFAP45 and CFAP52; CFAP45 and AK8 dimerization may create a cavity at the interface of the dimer that can accommodate AMP.</text>
</comment>
<comment type="subcellular location">
    <subcellularLocation>
        <location evidence="2">Cytoplasm</location>
        <location evidence="2">Cytosol</location>
    </subcellularLocation>
    <subcellularLocation>
        <location evidence="2">Cytoplasm</location>
        <location evidence="2">Cytoskeleton</location>
        <location evidence="2">Cilium axoneme</location>
    </subcellularLocation>
    <text evidence="2">Located in the proximal region of respiratory cilia.</text>
</comment>
<comment type="similarity">
    <text evidence="3">Belongs to the adenylate kinase family.</text>
</comment>
<gene>
    <name type="primary">Ak8</name>
</gene>
<name>KAD8_MOUSE</name>
<accession>Q32M07</accession>
<accession>Q497L2</accession>
<keyword id="KW-0067">ATP-binding</keyword>
<keyword id="KW-0966">Cell projection</keyword>
<keyword id="KW-0963">Cytoplasm</keyword>
<keyword id="KW-0206">Cytoskeleton</keyword>
<keyword id="KW-0418">Kinase</keyword>
<keyword id="KW-0547">Nucleotide-binding</keyword>
<keyword id="KW-1185">Reference proteome</keyword>
<keyword id="KW-0808">Transferase</keyword>
<feature type="chain" id="PRO_0000279385" description="Adenylate kinase 8">
    <location>
        <begin position="1"/>
        <end position="479"/>
    </location>
</feature>
<feature type="region of interest" description="Adenylate kinase 1" evidence="2">
    <location>
        <begin position="58"/>
        <end position="258"/>
    </location>
</feature>
<feature type="region of interest" description="NMP 1" evidence="1">
    <location>
        <begin position="87"/>
        <end position="113"/>
    </location>
</feature>
<feature type="region of interest" description="LID 1" evidence="1">
    <location>
        <begin position="177"/>
        <end position="206"/>
    </location>
</feature>
<feature type="region of interest" description="Adenylate kinase 2" evidence="2">
    <location>
        <begin position="269"/>
        <end position="471"/>
    </location>
</feature>
<feature type="region of interest" description="NMP 2" evidence="1">
    <location>
        <begin position="298"/>
        <end position="327"/>
    </location>
</feature>
<feature type="region of interest" description="LID 2" evidence="1">
    <location>
        <begin position="391"/>
        <end position="424"/>
    </location>
</feature>
<feature type="binding site" evidence="1">
    <location>
        <begin position="67"/>
        <end position="72"/>
    </location>
    <ligand>
        <name>ATP</name>
        <dbReference type="ChEBI" id="CHEBI:30616"/>
        <label>1</label>
    </ligand>
</feature>
<feature type="binding site" evidence="1">
    <location>
        <begin position="140"/>
        <end position="143"/>
    </location>
    <ligand>
        <name>AMP</name>
        <dbReference type="ChEBI" id="CHEBI:456215"/>
        <label>1</label>
    </ligand>
</feature>
<feature type="binding site" evidence="1">
    <location>
        <position position="147"/>
    </location>
    <ligand>
        <name>AMP</name>
        <dbReference type="ChEBI" id="CHEBI:456215"/>
        <label>1</label>
    </ligand>
</feature>
<feature type="binding site" evidence="1">
    <location>
        <position position="203"/>
    </location>
    <ligand>
        <name>AMP</name>
        <dbReference type="ChEBI" id="CHEBI:456215"/>
        <label>1</label>
    </ligand>
</feature>
<feature type="binding site" evidence="1">
    <location>
        <begin position="278"/>
        <end position="283"/>
    </location>
    <ligand>
        <name>ATP</name>
        <dbReference type="ChEBI" id="CHEBI:30616"/>
        <label>2</label>
    </ligand>
</feature>
<feature type="binding site" evidence="1">
    <location>
        <begin position="325"/>
        <end position="327"/>
    </location>
    <ligand>
        <name>AMP</name>
        <dbReference type="ChEBI" id="CHEBI:456215"/>
        <label>2</label>
    </ligand>
</feature>
<feature type="binding site" evidence="1">
    <location>
        <begin position="354"/>
        <end position="357"/>
    </location>
    <ligand>
        <name>AMP</name>
        <dbReference type="ChEBI" id="CHEBI:456215"/>
        <label>2</label>
    </ligand>
</feature>
<feature type="binding site" evidence="1">
    <location>
        <position position="361"/>
    </location>
    <ligand>
        <name>AMP</name>
        <dbReference type="ChEBI" id="CHEBI:456215"/>
        <label>2</label>
    </ligand>
</feature>
<feature type="binding site" evidence="1">
    <location>
        <position position="392"/>
    </location>
    <ligand>
        <name>ATP</name>
        <dbReference type="ChEBI" id="CHEBI:30616"/>
        <label>2</label>
    </ligand>
</feature>
<feature type="sequence conflict" description="In Ref. 2; AAI00482." evidence="3" ref="2">
    <original>S</original>
    <variation>G</variation>
    <location>
        <position position="468"/>
    </location>
</feature>
<sequence length="479" mass="55073">MDATTAPHRIPPEMPQYGEDYYIFEMMQNMLEQLLIHQPEDPISFMITHLRRNNDNVPKVVILGPPASGKTTIAMWLCKHLNSNLITKESLLEREFSRLSVEAKSYYQVYKKIPNSILVSLVQERLNEDDCLRKGWILDGIPERREQALMIQTLGLAPKHVIVLNAPDTVLIERNVGKRIDPVTGEIYHTTFDWPPEPEIQNRLRQPEGISEIETAKKLLEYHRHIIRILPSYPKILKTISSDQPCVDVFYQALTYVQSGHRCNAPFTPKVLLCGPLGSGKRLQATLLAQKYGLVNISCGQLLKEAVAAKSSFGELIQPFFEKRMTVPDSIITKVLADRMEQQDCIQKGWVLHGFPRDLDQARMLNSMGYNPNRVFFLSVPLDSILERLTLRRTDPVTGERFHLMYKPPPTIEVQVRLLQNPKDSEEYIKLQTDLFYRNSGDLEQYYDRAIIVNGDQDPYTVFEYIESGIINPLPRKVT</sequence>
<reference key="1">
    <citation type="journal article" date="2009" name="PLoS Biol.">
        <title>Lineage-specific biology revealed by a finished genome assembly of the mouse.</title>
        <authorList>
            <person name="Church D.M."/>
            <person name="Goodstadt L."/>
            <person name="Hillier L.W."/>
            <person name="Zody M.C."/>
            <person name="Goldstein S."/>
            <person name="She X."/>
            <person name="Bult C.J."/>
            <person name="Agarwala R."/>
            <person name="Cherry J.L."/>
            <person name="DiCuccio M."/>
            <person name="Hlavina W."/>
            <person name="Kapustin Y."/>
            <person name="Meric P."/>
            <person name="Maglott D."/>
            <person name="Birtle Z."/>
            <person name="Marques A.C."/>
            <person name="Graves T."/>
            <person name="Zhou S."/>
            <person name="Teague B."/>
            <person name="Potamousis K."/>
            <person name="Churas C."/>
            <person name="Place M."/>
            <person name="Herschleb J."/>
            <person name="Runnheim R."/>
            <person name="Forrest D."/>
            <person name="Amos-Landgraf J."/>
            <person name="Schwartz D.C."/>
            <person name="Cheng Z."/>
            <person name="Lindblad-Toh K."/>
            <person name="Eichler E.E."/>
            <person name="Ponting C.P."/>
        </authorList>
    </citation>
    <scope>NUCLEOTIDE SEQUENCE [LARGE SCALE GENOMIC DNA]</scope>
    <source>
        <strain>C57BL/6J</strain>
    </source>
</reference>
<reference key="2">
    <citation type="journal article" date="2004" name="Genome Res.">
        <title>The status, quality, and expansion of the NIH full-length cDNA project: the Mammalian Gene Collection (MGC).</title>
        <authorList>
            <consortium name="The MGC Project Team"/>
        </authorList>
    </citation>
    <scope>NUCLEOTIDE SEQUENCE [LARGE SCALE MRNA]</scope>
    <source>
        <tissue>Testis</tissue>
    </source>
</reference>
<reference key="3">
    <citation type="journal article" date="2010" name="Cell">
        <title>A tissue-specific atlas of mouse protein phosphorylation and expression.</title>
        <authorList>
            <person name="Huttlin E.L."/>
            <person name="Jedrychowski M.P."/>
            <person name="Elias J.E."/>
            <person name="Goswami T."/>
            <person name="Rad R."/>
            <person name="Beausoleil S.A."/>
            <person name="Villen J."/>
            <person name="Haas W."/>
            <person name="Sowa M.E."/>
            <person name="Gygi S.P."/>
        </authorList>
    </citation>
    <scope>IDENTIFICATION BY MASS SPECTROMETRY [LARGE SCALE ANALYSIS]</scope>
    <source>
        <tissue>Testis</tissue>
    </source>
</reference>
<organism>
    <name type="scientific">Mus musculus</name>
    <name type="common">Mouse</name>
    <dbReference type="NCBI Taxonomy" id="10090"/>
    <lineage>
        <taxon>Eukaryota</taxon>
        <taxon>Metazoa</taxon>
        <taxon>Chordata</taxon>
        <taxon>Craniata</taxon>
        <taxon>Vertebrata</taxon>
        <taxon>Euteleostomi</taxon>
        <taxon>Mammalia</taxon>
        <taxon>Eutheria</taxon>
        <taxon>Euarchontoglires</taxon>
        <taxon>Glires</taxon>
        <taxon>Rodentia</taxon>
        <taxon>Myomorpha</taxon>
        <taxon>Muroidea</taxon>
        <taxon>Muridae</taxon>
        <taxon>Murinae</taxon>
        <taxon>Mus</taxon>
        <taxon>Mus</taxon>
    </lineage>
</organism>